<name>BDM_SALTY</name>
<proteinExistence type="predicted"/>
<organism>
    <name type="scientific">Salmonella typhimurium (strain LT2 / SGSC1412 / ATCC 700720)</name>
    <dbReference type="NCBI Taxonomy" id="99287"/>
    <lineage>
        <taxon>Bacteria</taxon>
        <taxon>Pseudomonadati</taxon>
        <taxon>Pseudomonadota</taxon>
        <taxon>Gammaproteobacteria</taxon>
        <taxon>Enterobacterales</taxon>
        <taxon>Enterobacteriaceae</taxon>
        <taxon>Salmonella</taxon>
    </lineage>
</organism>
<feature type="chain" id="PRO_0000064903" description="Protein bdm homolog">
    <location>
        <begin position="1"/>
        <end position="71"/>
    </location>
</feature>
<keyword id="KW-1185">Reference proteome</keyword>
<gene>
    <name type="primary">bdm</name>
    <name type="ordered locus">STM1564</name>
</gene>
<accession>P65641</accession>
<accession>Q8XFJ2</accession>
<reference key="1">
    <citation type="journal article" date="2001" name="Nature">
        <title>Complete genome sequence of Salmonella enterica serovar Typhimurium LT2.</title>
        <authorList>
            <person name="McClelland M."/>
            <person name="Sanderson K.E."/>
            <person name="Spieth J."/>
            <person name="Clifton S.W."/>
            <person name="Latreille P."/>
            <person name="Courtney L."/>
            <person name="Porwollik S."/>
            <person name="Ali J."/>
            <person name="Dante M."/>
            <person name="Du F."/>
            <person name="Hou S."/>
            <person name="Layman D."/>
            <person name="Leonard S."/>
            <person name="Nguyen C."/>
            <person name="Scott K."/>
            <person name="Holmes A."/>
            <person name="Grewal N."/>
            <person name="Mulvaney E."/>
            <person name="Ryan E."/>
            <person name="Sun H."/>
            <person name="Florea L."/>
            <person name="Miller W."/>
            <person name="Stoneking T."/>
            <person name="Nhan M."/>
            <person name="Waterston R."/>
            <person name="Wilson R.K."/>
        </authorList>
    </citation>
    <scope>NUCLEOTIDE SEQUENCE [LARGE SCALE GENOMIC DNA]</scope>
    <source>
        <strain>LT2 / SGSC1412 / ATCC 700720</strain>
    </source>
</reference>
<protein>
    <recommendedName>
        <fullName>Protein bdm homolog</fullName>
    </recommendedName>
</protein>
<sequence length="71" mass="7838">MFTYHSANTSAAQPALVNAIEQGLRAELGVVTEDDILMELTKWVEASDNDILSDIYQQTINYVVSGQHPTL</sequence>
<dbReference type="EMBL" id="AE006468">
    <property type="protein sequence ID" value="AAL20482.1"/>
    <property type="molecule type" value="Genomic_DNA"/>
</dbReference>
<dbReference type="RefSeq" id="WP_000495700.1">
    <property type="nucleotide sequence ID" value="NC_003197.2"/>
</dbReference>
<dbReference type="SMR" id="P65641"/>
<dbReference type="STRING" id="99287.STM1564"/>
<dbReference type="PaxDb" id="99287-STM1564"/>
<dbReference type="GeneID" id="66756002"/>
<dbReference type="KEGG" id="stm:STM1564"/>
<dbReference type="PATRIC" id="fig|99287.12.peg.1655"/>
<dbReference type="HOGENOM" id="CLU_186729_0_0_6"/>
<dbReference type="OMA" id="THYSANT"/>
<dbReference type="PhylomeDB" id="P65641"/>
<dbReference type="BioCyc" id="SENT99287:STM1564-MONOMER"/>
<dbReference type="Proteomes" id="UP000001014">
    <property type="component" value="Chromosome"/>
</dbReference>
<dbReference type="InterPro" id="IPR019625">
    <property type="entry name" value="Biofilm-dep_modulation_Bdm_put"/>
</dbReference>
<dbReference type="NCBIfam" id="NF008515">
    <property type="entry name" value="PRK11436.1"/>
    <property type="match status" value="1"/>
</dbReference>
<dbReference type="Pfam" id="PF10684">
    <property type="entry name" value="BDM"/>
    <property type="match status" value="1"/>
</dbReference>